<dbReference type="EC" id="6.1.1.3" evidence="1"/>
<dbReference type="EMBL" id="CP000013">
    <property type="protein sequence ID" value="AAU07568.1"/>
    <property type="molecule type" value="Genomic_DNA"/>
</dbReference>
<dbReference type="RefSeq" id="WP_011194016.1">
    <property type="nucleotide sequence ID" value="NC_006156.1"/>
</dbReference>
<dbReference type="SMR" id="Q660F3"/>
<dbReference type="GeneID" id="45161518"/>
<dbReference type="KEGG" id="bga:BG0742"/>
<dbReference type="eggNOG" id="COG0441">
    <property type="taxonomic scope" value="Bacteria"/>
</dbReference>
<dbReference type="HOGENOM" id="CLU_008554_0_1_12"/>
<dbReference type="OrthoDB" id="9802304at2"/>
<dbReference type="Proteomes" id="UP000002276">
    <property type="component" value="Chromosome"/>
</dbReference>
<dbReference type="GO" id="GO:0005737">
    <property type="term" value="C:cytoplasm"/>
    <property type="evidence" value="ECO:0007669"/>
    <property type="project" value="UniProtKB-SubCell"/>
</dbReference>
<dbReference type="GO" id="GO:0005524">
    <property type="term" value="F:ATP binding"/>
    <property type="evidence" value="ECO:0007669"/>
    <property type="project" value="UniProtKB-UniRule"/>
</dbReference>
<dbReference type="GO" id="GO:0046872">
    <property type="term" value="F:metal ion binding"/>
    <property type="evidence" value="ECO:0007669"/>
    <property type="project" value="UniProtKB-KW"/>
</dbReference>
<dbReference type="GO" id="GO:0004829">
    <property type="term" value="F:threonine-tRNA ligase activity"/>
    <property type="evidence" value="ECO:0007669"/>
    <property type="project" value="UniProtKB-UniRule"/>
</dbReference>
<dbReference type="GO" id="GO:0000049">
    <property type="term" value="F:tRNA binding"/>
    <property type="evidence" value="ECO:0007669"/>
    <property type="project" value="UniProtKB-KW"/>
</dbReference>
<dbReference type="GO" id="GO:0006435">
    <property type="term" value="P:threonyl-tRNA aminoacylation"/>
    <property type="evidence" value="ECO:0007669"/>
    <property type="project" value="UniProtKB-UniRule"/>
</dbReference>
<dbReference type="CDD" id="cd00860">
    <property type="entry name" value="ThrRS_anticodon"/>
    <property type="match status" value="1"/>
</dbReference>
<dbReference type="CDD" id="cd00771">
    <property type="entry name" value="ThrRS_core"/>
    <property type="match status" value="1"/>
</dbReference>
<dbReference type="FunFam" id="3.30.930.10:FF:000019">
    <property type="entry name" value="Threonine--tRNA ligase"/>
    <property type="match status" value="1"/>
</dbReference>
<dbReference type="FunFam" id="3.40.50.800:FF:000001">
    <property type="entry name" value="Threonine--tRNA ligase"/>
    <property type="match status" value="1"/>
</dbReference>
<dbReference type="FunFam" id="3.30.980.10:FF:000005">
    <property type="entry name" value="Threonyl-tRNA synthetase, mitochondrial"/>
    <property type="match status" value="1"/>
</dbReference>
<dbReference type="Gene3D" id="3.30.54.20">
    <property type="match status" value="1"/>
</dbReference>
<dbReference type="Gene3D" id="3.40.50.800">
    <property type="entry name" value="Anticodon-binding domain"/>
    <property type="match status" value="1"/>
</dbReference>
<dbReference type="Gene3D" id="3.30.930.10">
    <property type="entry name" value="Bira Bifunctional Protein, Domain 2"/>
    <property type="match status" value="1"/>
</dbReference>
<dbReference type="Gene3D" id="3.30.980.10">
    <property type="entry name" value="Threonyl-trna Synthetase, Chain A, domain 2"/>
    <property type="match status" value="1"/>
</dbReference>
<dbReference type="HAMAP" id="MF_00184">
    <property type="entry name" value="Thr_tRNA_synth"/>
    <property type="match status" value="1"/>
</dbReference>
<dbReference type="InterPro" id="IPR002314">
    <property type="entry name" value="aa-tRNA-synt_IIb"/>
</dbReference>
<dbReference type="InterPro" id="IPR006195">
    <property type="entry name" value="aa-tRNA-synth_II"/>
</dbReference>
<dbReference type="InterPro" id="IPR045864">
    <property type="entry name" value="aa-tRNA-synth_II/BPL/LPL"/>
</dbReference>
<dbReference type="InterPro" id="IPR004154">
    <property type="entry name" value="Anticodon-bd"/>
</dbReference>
<dbReference type="InterPro" id="IPR036621">
    <property type="entry name" value="Anticodon-bd_dom_sf"/>
</dbReference>
<dbReference type="InterPro" id="IPR002320">
    <property type="entry name" value="Thr-tRNA-ligase_IIa"/>
</dbReference>
<dbReference type="InterPro" id="IPR018163">
    <property type="entry name" value="Thr/Ala-tRNA-synth_IIc_edit"/>
</dbReference>
<dbReference type="InterPro" id="IPR047246">
    <property type="entry name" value="ThrRS_anticodon"/>
</dbReference>
<dbReference type="InterPro" id="IPR033728">
    <property type="entry name" value="ThrRS_core"/>
</dbReference>
<dbReference type="InterPro" id="IPR012947">
    <property type="entry name" value="tRNA_SAD"/>
</dbReference>
<dbReference type="NCBIfam" id="TIGR00418">
    <property type="entry name" value="thrS"/>
    <property type="match status" value="1"/>
</dbReference>
<dbReference type="PANTHER" id="PTHR11451:SF44">
    <property type="entry name" value="THREONINE--TRNA LIGASE, CHLOROPLASTIC_MITOCHONDRIAL 2"/>
    <property type="match status" value="1"/>
</dbReference>
<dbReference type="PANTHER" id="PTHR11451">
    <property type="entry name" value="THREONINE-TRNA LIGASE"/>
    <property type="match status" value="1"/>
</dbReference>
<dbReference type="Pfam" id="PF03129">
    <property type="entry name" value="HGTP_anticodon"/>
    <property type="match status" value="1"/>
</dbReference>
<dbReference type="Pfam" id="PF00587">
    <property type="entry name" value="tRNA-synt_2b"/>
    <property type="match status" value="1"/>
</dbReference>
<dbReference type="Pfam" id="PF07973">
    <property type="entry name" value="tRNA_SAD"/>
    <property type="match status" value="1"/>
</dbReference>
<dbReference type="PRINTS" id="PR01047">
    <property type="entry name" value="TRNASYNTHTHR"/>
</dbReference>
<dbReference type="SMART" id="SM00863">
    <property type="entry name" value="tRNA_SAD"/>
    <property type="match status" value="1"/>
</dbReference>
<dbReference type="SUPFAM" id="SSF52954">
    <property type="entry name" value="Class II aaRS ABD-related"/>
    <property type="match status" value="1"/>
</dbReference>
<dbReference type="SUPFAM" id="SSF55681">
    <property type="entry name" value="Class II aaRS and biotin synthetases"/>
    <property type="match status" value="1"/>
</dbReference>
<dbReference type="SUPFAM" id="SSF55186">
    <property type="entry name" value="ThrRS/AlaRS common domain"/>
    <property type="match status" value="1"/>
</dbReference>
<dbReference type="PROSITE" id="PS50862">
    <property type="entry name" value="AA_TRNA_LIGASE_II"/>
    <property type="match status" value="1"/>
</dbReference>
<evidence type="ECO:0000255" key="1">
    <source>
        <dbReference type="HAMAP-Rule" id="MF_00184"/>
    </source>
</evidence>
<comment type="function">
    <text evidence="1">Catalyzes the attachment of threonine to tRNA(Thr) in a two-step reaction: L-threonine is first activated by ATP to form Thr-AMP and then transferred to the acceptor end of tRNA(Thr). Also edits incorrectly charged L-seryl-tRNA(Thr).</text>
</comment>
<comment type="catalytic activity">
    <reaction evidence="1">
        <text>tRNA(Thr) + L-threonine + ATP = L-threonyl-tRNA(Thr) + AMP + diphosphate + H(+)</text>
        <dbReference type="Rhea" id="RHEA:24624"/>
        <dbReference type="Rhea" id="RHEA-COMP:9670"/>
        <dbReference type="Rhea" id="RHEA-COMP:9704"/>
        <dbReference type="ChEBI" id="CHEBI:15378"/>
        <dbReference type="ChEBI" id="CHEBI:30616"/>
        <dbReference type="ChEBI" id="CHEBI:33019"/>
        <dbReference type="ChEBI" id="CHEBI:57926"/>
        <dbReference type="ChEBI" id="CHEBI:78442"/>
        <dbReference type="ChEBI" id="CHEBI:78534"/>
        <dbReference type="ChEBI" id="CHEBI:456215"/>
        <dbReference type="EC" id="6.1.1.3"/>
    </reaction>
</comment>
<comment type="cofactor">
    <cofactor evidence="1">
        <name>Zn(2+)</name>
        <dbReference type="ChEBI" id="CHEBI:29105"/>
    </cofactor>
    <text evidence="1">Binds 1 zinc ion per subunit.</text>
</comment>
<comment type="subunit">
    <text evidence="1">Homodimer.</text>
</comment>
<comment type="subcellular location">
    <subcellularLocation>
        <location evidence="1">Cytoplasm</location>
    </subcellularLocation>
</comment>
<comment type="similarity">
    <text evidence="1">Belongs to the class-II aminoacyl-tRNA synthetase family.</text>
</comment>
<organism>
    <name type="scientific">Borrelia garinii subsp. bavariensis (strain ATCC BAA-2496 / DSM 23469 / PBi)</name>
    <name type="common">Borreliella bavariensis</name>
    <dbReference type="NCBI Taxonomy" id="290434"/>
    <lineage>
        <taxon>Bacteria</taxon>
        <taxon>Pseudomonadati</taxon>
        <taxon>Spirochaetota</taxon>
        <taxon>Spirochaetia</taxon>
        <taxon>Spirochaetales</taxon>
        <taxon>Borreliaceae</taxon>
        <taxon>Borreliella</taxon>
    </lineage>
</organism>
<protein>
    <recommendedName>
        <fullName evidence="1">Threonine--tRNA ligase</fullName>
        <ecNumber evidence="1">6.1.1.3</ecNumber>
    </recommendedName>
    <alternativeName>
        <fullName evidence="1">Threonyl-tRNA synthetase</fullName>
        <shortName evidence="1">ThrRS</shortName>
    </alternativeName>
</protein>
<gene>
    <name evidence="1" type="primary">thrS</name>
    <name type="ordered locus">BG0742</name>
</gene>
<proteinExistence type="inferred from homology"/>
<name>SYT_BORGP</name>
<sequence length="582" mass="68163">MSKDLYKEDILYKKRHSIAHVMAEAVCDLFPNTKIAIGPPIKDGFYYDFEFKNPITEDSLLDIENRMREILKTGSSFEKEIISLEQALEIFKDEPYKIDLIKNFDLQNEISIYKSHNFIDLCRGPHVDNMNKIDPKAFKLTGIAGAYWRGNEKNTMLTRIYGTLWNNEKELRSYLNLREEIKKRDHRKLGKELDLFSIHEEIGPGLIFFHPNGAKIRALIEDFWREEHSKNGYDILFTPHVGKSWLWQTSGHLNFYKDSMFEKIEMDKSDYYLKPMNCPFHIAIYNTGKHSYRDLPFRWAELGTVYRYEKIGALHGMMRARGFTQDDAHIICTHSQVVDEIKEVLRFAIYMWSKFGFNSLKAYLSTKPDKSVGNNSDWEMSLKVLKEALSDFEVPYEIDKGGGAFYGPKIDLKIVDSLEREWQMSTIQFDFNLPERFNMTYTSEDGKEKRPFMIHRALLGSIERFFGILVEHYGGAFPLWLSHVQAVIIPVNNIVEDYTIKVFNKFKNAGIRIKLDNSSSRMNAKIREYQAKKIPYMFIIGEREAIEERISIRTRTNEQINGIELDEALKLILLKVRDKEIS</sequence>
<accession>Q660F3</accession>
<feature type="chain" id="PRO_0000100946" description="Threonine--tRNA ligase">
    <location>
        <begin position="1"/>
        <end position="582"/>
    </location>
</feature>
<feature type="region of interest" description="Catalytic" evidence="1">
    <location>
        <begin position="185"/>
        <end position="478"/>
    </location>
</feature>
<feature type="binding site" evidence="1">
    <location>
        <position position="278"/>
    </location>
    <ligand>
        <name>Zn(2+)</name>
        <dbReference type="ChEBI" id="CHEBI:29105"/>
    </ligand>
</feature>
<feature type="binding site" evidence="1">
    <location>
        <position position="329"/>
    </location>
    <ligand>
        <name>Zn(2+)</name>
        <dbReference type="ChEBI" id="CHEBI:29105"/>
    </ligand>
</feature>
<feature type="binding site" evidence="1">
    <location>
        <position position="455"/>
    </location>
    <ligand>
        <name>Zn(2+)</name>
        <dbReference type="ChEBI" id="CHEBI:29105"/>
    </ligand>
</feature>
<reference key="1">
    <citation type="journal article" date="2004" name="Nucleic Acids Res.">
        <title>Comparative analysis of the Borrelia garinii genome.</title>
        <authorList>
            <person name="Gloeckner G."/>
            <person name="Lehmann R."/>
            <person name="Romualdi A."/>
            <person name="Pradella S."/>
            <person name="Schulte-Spechtel U."/>
            <person name="Schilhabel M."/>
            <person name="Wilske B."/>
            <person name="Suehnel J."/>
            <person name="Platzer M."/>
        </authorList>
    </citation>
    <scope>NUCLEOTIDE SEQUENCE [LARGE SCALE GENOMIC DNA]</scope>
    <source>
        <strain>ATCC BAA-2496 / DSM 23469 / PBi</strain>
    </source>
</reference>
<keyword id="KW-0030">Aminoacyl-tRNA synthetase</keyword>
<keyword id="KW-0067">ATP-binding</keyword>
<keyword id="KW-0963">Cytoplasm</keyword>
<keyword id="KW-0436">Ligase</keyword>
<keyword id="KW-0479">Metal-binding</keyword>
<keyword id="KW-0547">Nucleotide-binding</keyword>
<keyword id="KW-0648">Protein biosynthesis</keyword>
<keyword id="KW-0694">RNA-binding</keyword>
<keyword id="KW-0820">tRNA-binding</keyword>
<keyword id="KW-0862">Zinc</keyword>